<protein>
    <recommendedName>
        <fullName evidence="1">Peptide chain release factor 1</fullName>
        <shortName evidence="1">RF-1</shortName>
    </recommendedName>
</protein>
<reference key="1">
    <citation type="journal article" date="2009" name="J. Bacteriol.">
        <title>Complete genome sequence and comparative genome analysis of enteropathogenic Escherichia coli O127:H6 strain E2348/69.</title>
        <authorList>
            <person name="Iguchi A."/>
            <person name="Thomson N.R."/>
            <person name="Ogura Y."/>
            <person name="Saunders D."/>
            <person name="Ooka T."/>
            <person name="Henderson I.R."/>
            <person name="Harris D."/>
            <person name="Asadulghani M."/>
            <person name="Kurokawa K."/>
            <person name="Dean P."/>
            <person name="Kenny B."/>
            <person name="Quail M.A."/>
            <person name="Thurston S."/>
            <person name="Dougan G."/>
            <person name="Hayashi T."/>
            <person name="Parkhill J."/>
            <person name="Frankel G."/>
        </authorList>
    </citation>
    <scope>NUCLEOTIDE SEQUENCE [LARGE SCALE GENOMIC DNA]</scope>
    <source>
        <strain>E2348/69 / EPEC</strain>
    </source>
</reference>
<name>RF1_ECO27</name>
<sequence length="360" mass="40526">MKPSIVAKLEALHERHEEVQALLGDAQTIADQERFRALSREYAQLSDVSRCFTDWQQVQEDIETAQMMLDDPEMREMAQDELREAKEKSEQLEQQLHVLLLPKDPDDERNAFLEVRAGTGGDEAALFAGDLFRMYSRYAEARRWRVEIMSASEGEHGGYKEIIAKISGDGVYGRLKFESGGHRVQRVPATESQGRIHTSACTVAVMPELPDAELPDINPADLRIDTFRSSGAGGQHVNTTDSAIRITHLPTGIVVECQDERSQHKNKAKALSVLGARIHAAEMAKRQQAEASTRRNLLGSGDRSDRNRTYNFPQGRVTDHRINLTLYRLDEVMEGKLDMLIEPIIQEHQADQLAALSEQE</sequence>
<organism>
    <name type="scientific">Escherichia coli O127:H6 (strain E2348/69 / EPEC)</name>
    <dbReference type="NCBI Taxonomy" id="574521"/>
    <lineage>
        <taxon>Bacteria</taxon>
        <taxon>Pseudomonadati</taxon>
        <taxon>Pseudomonadota</taxon>
        <taxon>Gammaproteobacteria</taxon>
        <taxon>Enterobacterales</taxon>
        <taxon>Enterobacteriaceae</taxon>
        <taxon>Escherichia</taxon>
    </lineage>
</organism>
<feature type="chain" id="PRO_1000193489" description="Peptide chain release factor 1">
    <location>
        <begin position="1"/>
        <end position="360"/>
    </location>
</feature>
<feature type="region of interest" description="Disordered" evidence="2">
    <location>
        <begin position="284"/>
        <end position="313"/>
    </location>
</feature>
<feature type="modified residue" description="N5-methylglutamine" evidence="1">
    <location>
        <position position="235"/>
    </location>
</feature>
<gene>
    <name evidence="1" type="primary">prfA</name>
    <name type="ordered locus">E2348C_1334</name>
</gene>
<accession>B7UQ99</accession>
<keyword id="KW-0963">Cytoplasm</keyword>
<keyword id="KW-0488">Methylation</keyword>
<keyword id="KW-0648">Protein biosynthesis</keyword>
<keyword id="KW-1185">Reference proteome</keyword>
<evidence type="ECO:0000255" key="1">
    <source>
        <dbReference type="HAMAP-Rule" id="MF_00093"/>
    </source>
</evidence>
<evidence type="ECO:0000256" key="2">
    <source>
        <dbReference type="SAM" id="MobiDB-lite"/>
    </source>
</evidence>
<dbReference type="EMBL" id="FM180568">
    <property type="protein sequence ID" value="CAS08882.1"/>
    <property type="molecule type" value="Genomic_DNA"/>
</dbReference>
<dbReference type="RefSeq" id="WP_000804719.1">
    <property type="nucleotide sequence ID" value="NC_011601.1"/>
</dbReference>
<dbReference type="SMR" id="B7UQ99"/>
<dbReference type="KEGG" id="ecg:E2348C_1334"/>
<dbReference type="HOGENOM" id="CLU_036856_0_1_6"/>
<dbReference type="Proteomes" id="UP000008205">
    <property type="component" value="Chromosome"/>
</dbReference>
<dbReference type="GO" id="GO:0005737">
    <property type="term" value="C:cytoplasm"/>
    <property type="evidence" value="ECO:0007669"/>
    <property type="project" value="UniProtKB-SubCell"/>
</dbReference>
<dbReference type="GO" id="GO:0016149">
    <property type="term" value="F:translation release factor activity, codon specific"/>
    <property type="evidence" value="ECO:0007669"/>
    <property type="project" value="UniProtKB-UniRule"/>
</dbReference>
<dbReference type="FunFam" id="3.30.160.20:FF:000004">
    <property type="entry name" value="Peptide chain release factor 1"/>
    <property type="match status" value="1"/>
</dbReference>
<dbReference type="FunFam" id="3.30.70.1660:FF:000002">
    <property type="entry name" value="Peptide chain release factor 1"/>
    <property type="match status" value="1"/>
</dbReference>
<dbReference type="FunFam" id="3.30.70.1660:FF:000004">
    <property type="entry name" value="Peptide chain release factor 1"/>
    <property type="match status" value="1"/>
</dbReference>
<dbReference type="Gene3D" id="3.30.160.20">
    <property type="match status" value="1"/>
</dbReference>
<dbReference type="Gene3D" id="3.30.70.1660">
    <property type="match status" value="1"/>
</dbReference>
<dbReference type="Gene3D" id="6.10.140.1950">
    <property type="match status" value="1"/>
</dbReference>
<dbReference type="HAMAP" id="MF_00093">
    <property type="entry name" value="Rel_fac_1"/>
    <property type="match status" value="1"/>
</dbReference>
<dbReference type="InterPro" id="IPR005139">
    <property type="entry name" value="PCRF"/>
</dbReference>
<dbReference type="InterPro" id="IPR000352">
    <property type="entry name" value="Pep_chain_release_fac_I"/>
</dbReference>
<dbReference type="InterPro" id="IPR045853">
    <property type="entry name" value="Pep_chain_release_fac_I_sf"/>
</dbReference>
<dbReference type="InterPro" id="IPR050057">
    <property type="entry name" value="Prokaryotic/Mito_RF"/>
</dbReference>
<dbReference type="InterPro" id="IPR004373">
    <property type="entry name" value="RF-1"/>
</dbReference>
<dbReference type="NCBIfam" id="TIGR00019">
    <property type="entry name" value="prfA"/>
    <property type="match status" value="1"/>
</dbReference>
<dbReference type="NCBIfam" id="NF001859">
    <property type="entry name" value="PRK00591.1"/>
    <property type="match status" value="1"/>
</dbReference>
<dbReference type="PANTHER" id="PTHR43804">
    <property type="entry name" value="LD18447P"/>
    <property type="match status" value="1"/>
</dbReference>
<dbReference type="PANTHER" id="PTHR43804:SF7">
    <property type="entry name" value="LD18447P"/>
    <property type="match status" value="1"/>
</dbReference>
<dbReference type="Pfam" id="PF03462">
    <property type="entry name" value="PCRF"/>
    <property type="match status" value="1"/>
</dbReference>
<dbReference type="Pfam" id="PF00472">
    <property type="entry name" value="RF-1"/>
    <property type="match status" value="1"/>
</dbReference>
<dbReference type="SMART" id="SM00937">
    <property type="entry name" value="PCRF"/>
    <property type="match status" value="1"/>
</dbReference>
<dbReference type="SUPFAM" id="SSF75620">
    <property type="entry name" value="Release factor"/>
    <property type="match status" value="1"/>
</dbReference>
<dbReference type="PROSITE" id="PS00745">
    <property type="entry name" value="RF_PROK_I"/>
    <property type="match status" value="1"/>
</dbReference>
<comment type="function">
    <text evidence="1">Peptide chain release factor 1 directs the termination of translation in response to the peptide chain termination codons UAG and UAA.</text>
</comment>
<comment type="subcellular location">
    <subcellularLocation>
        <location evidence="1">Cytoplasm</location>
    </subcellularLocation>
</comment>
<comment type="PTM">
    <text evidence="1">Methylated by PrmC. Methylation increases the termination efficiency of RF1.</text>
</comment>
<comment type="similarity">
    <text evidence="1">Belongs to the prokaryotic/mitochondrial release factor family.</text>
</comment>
<proteinExistence type="inferred from homology"/>